<evidence type="ECO:0000250" key="1">
    <source>
        <dbReference type="UniProtKB" id="A0A061FMF5"/>
    </source>
</evidence>
<evidence type="ECO:0000250" key="2">
    <source>
        <dbReference type="UniProtKB" id="A0A6C0WW36"/>
    </source>
</evidence>
<evidence type="ECO:0000250" key="3">
    <source>
        <dbReference type="UniProtKB" id="Q2HXI6"/>
    </source>
</evidence>
<evidence type="ECO:0000250" key="4">
    <source>
        <dbReference type="UniProtKB" id="Q9FLN8"/>
    </source>
</evidence>
<evidence type="ECO:0000250" key="5">
    <source>
        <dbReference type="UniProtKB" id="Q9FZN8"/>
    </source>
</evidence>
<evidence type="ECO:0000305" key="6"/>
<evidence type="ECO:0000312" key="7">
    <source>
        <dbReference type="EMBL" id="EOY17876.1"/>
    </source>
</evidence>
<keyword id="KW-0460">Magnesium</keyword>
<keyword id="KW-0479">Metal-binding</keyword>
<keyword id="KW-0489">Methyltransferase</keyword>
<keyword id="KW-1185">Reference proteome</keyword>
<keyword id="KW-0808">Transferase</keyword>
<protein>
    <recommendedName>
        <fullName evidence="6">Probable 7-methylxanthine methyltransferase 4</fullName>
        <ecNumber evidence="1">2.1.1.159</ecNumber>
    </recommendedName>
    <alternativeName>
        <fullName evidence="6">Theobromine synthase TCM_042580</fullName>
    </alternativeName>
</protein>
<organism>
    <name type="scientific">Theobroma cacao</name>
    <name type="common">Cacao</name>
    <name type="synonym">Cocoa</name>
    <dbReference type="NCBI Taxonomy" id="3641"/>
    <lineage>
        <taxon>Eukaryota</taxon>
        <taxon>Viridiplantae</taxon>
        <taxon>Streptophyta</taxon>
        <taxon>Embryophyta</taxon>
        <taxon>Tracheophyta</taxon>
        <taxon>Spermatophyta</taxon>
        <taxon>Magnoliopsida</taxon>
        <taxon>eudicotyledons</taxon>
        <taxon>Gunneridae</taxon>
        <taxon>Pentapetalae</taxon>
        <taxon>rosids</taxon>
        <taxon>malvids</taxon>
        <taxon>Malvales</taxon>
        <taxon>Malvaceae</taxon>
        <taxon>Byttnerioideae</taxon>
        <taxon>Theobroma</taxon>
    </lineage>
</organism>
<accession>A0A061FLA2</accession>
<name>BTS4_THECC</name>
<sequence>MEVKDIVFMNKGDGENSYVKSAGLTLKVIAKTQPMVQKAVQSLFKGTHSAPLQVVNVADLGCALAPQPLESMSIVIESIVEKCGELGCEMPEIQFHFNDLAGNDFNTLFKGLSVVQEKYKNVSWFAMGAPGSFHGRLFPRNSMHLVHSCYSVHWLSKAPKITSEEGLPLNKGKIYMSKTSXXXXXXXXXXXFEEDFSSVLRFRSPELAPDGRMVLILNGRQSADPTEKDICYLWDLLAEALSYLVSEGLIDEEKLDSFNVPYYNPSQEEVERVIDKEGSFTTEFSDTVVLEIGGKNAWSDPGLRIKGYRCFSEPVLSHQFGEEVMDKLFDKAEEILAEDYKQGKEATKNISIVVVLKKKTNQTWT</sequence>
<feature type="chain" id="PRO_0000451786" description="Probable 7-methylxanthine methyltransferase 4">
    <location>
        <begin position="1"/>
        <end position="365"/>
    </location>
</feature>
<feature type="binding site" evidence="2">
    <location>
        <position position="18"/>
    </location>
    <ligand>
        <name>S-adenosyl-L-homocysteine</name>
        <dbReference type="ChEBI" id="CHEBI:57856"/>
    </ligand>
</feature>
<feature type="binding site" evidence="2">
    <location>
        <position position="25"/>
    </location>
    <ligand>
        <name>theobromine</name>
        <dbReference type="ChEBI" id="CHEBI:28946"/>
    </ligand>
</feature>
<feature type="binding site" evidence="2">
    <location>
        <position position="62"/>
    </location>
    <ligand>
        <name>S-adenosyl-L-homocysteine</name>
        <dbReference type="ChEBI" id="CHEBI:57856"/>
    </ligand>
</feature>
<feature type="binding site" evidence="2">
    <location>
        <position position="67"/>
    </location>
    <ligand>
        <name>S-adenosyl-L-homocysteine</name>
        <dbReference type="ChEBI" id="CHEBI:57856"/>
    </ligand>
</feature>
<feature type="binding site" evidence="2">
    <location>
        <position position="99"/>
    </location>
    <ligand>
        <name>S-adenosyl-L-homocysteine</name>
        <dbReference type="ChEBI" id="CHEBI:57856"/>
    </ligand>
</feature>
<feature type="binding site" evidence="2">
    <location>
        <position position="100"/>
    </location>
    <ligand>
        <name>S-adenosyl-L-homocysteine</name>
        <dbReference type="ChEBI" id="CHEBI:57856"/>
    </ligand>
</feature>
<feature type="binding site" evidence="2">
    <location>
        <position position="132"/>
    </location>
    <ligand>
        <name>S-adenosyl-L-homocysteine</name>
        <dbReference type="ChEBI" id="CHEBI:57856"/>
    </ligand>
</feature>
<feature type="binding site" evidence="2">
    <location>
        <position position="133"/>
    </location>
    <ligand>
        <name>S-adenosyl-L-homocysteine</name>
        <dbReference type="ChEBI" id="CHEBI:57856"/>
    </ligand>
</feature>
<feature type="binding site" evidence="2">
    <location>
        <position position="150"/>
    </location>
    <ligand>
        <name>theobromine</name>
        <dbReference type="ChEBI" id="CHEBI:28946"/>
    </ligand>
</feature>
<feature type="binding site" evidence="2">
    <location>
        <position position="153"/>
    </location>
    <ligand>
        <name>theobromine</name>
        <dbReference type="ChEBI" id="CHEBI:28946"/>
    </ligand>
</feature>
<feature type="binding site" evidence="2">
    <location>
        <position position="154"/>
    </location>
    <ligand>
        <name>theobromine</name>
        <dbReference type="ChEBI" id="CHEBI:28946"/>
    </ligand>
</feature>
<feature type="binding site" evidence="4">
    <location>
        <position position="170"/>
    </location>
    <ligand>
        <name>Mg(2+)</name>
        <dbReference type="ChEBI" id="CHEBI:18420"/>
    </ligand>
</feature>
<feature type="binding site" evidence="4">
    <location>
        <position position="256"/>
    </location>
    <ligand>
        <name>Mg(2+)</name>
        <dbReference type="ChEBI" id="CHEBI:18420"/>
    </ligand>
</feature>
<feature type="binding site" evidence="4">
    <location>
        <position position="258"/>
    </location>
    <ligand>
        <name>Mg(2+)</name>
        <dbReference type="ChEBI" id="CHEBI:18420"/>
    </ligand>
</feature>
<feature type="binding site" evidence="4">
    <location>
        <position position="259"/>
    </location>
    <ligand>
        <name>Mg(2+)</name>
        <dbReference type="ChEBI" id="CHEBI:18420"/>
    </ligand>
</feature>
<feature type="binding site" evidence="2">
    <location>
        <position position="311"/>
    </location>
    <ligand>
        <name>theobromine</name>
        <dbReference type="ChEBI" id="CHEBI:28946"/>
    </ligand>
</feature>
<feature type="site" description="Involved in substrate discrimination" evidence="5">
    <location>
        <position position="147"/>
    </location>
</feature>
<feature type="site" description="Involved in substrate discrimination" evidence="3">
    <location>
        <position position="218"/>
    </location>
</feature>
<feature type="site" description="Involved in substrate discrimination" evidence="5">
    <location>
        <position position="262"/>
    </location>
</feature>
<feature type="site" description="Involved in substrate discrimination" evidence="5">
    <location>
        <position position="322"/>
    </location>
</feature>
<gene>
    <name evidence="7" type="ORF">TCM_042580</name>
</gene>
<reference key="1">
    <citation type="journal article" date="2013" name="Genome Biol.">
        <title>The genome sequence of the most widely cultivated cacao type and its use to identify candidate genes regulating pod color.</title>
        <authorList>
            <person name="Motamayor J.C."/>
            <person name="Mockaitis K."/>
            <person name="Schmutz J."/>
            <person name="Haiminen N."/>
            <person name="Livingstone D. III"/>
            <person name="Cornejo O."/>
            <person name="Findley S.D."/>
            <person name="Zheng P."/>
            <person name="Utro F."/>
            <person name="Royaert S."/>
            <person name="Saski C."/>
            <person name="Jenkins J."/>
            <person name="Podicheti R."/>
            <person name="Zhao M."/>
            <person name="Scheffler B.E."/>
            <person name="Stack J.C."/>
            <person name="Feltus F.A."/>
            <person name="Mustiga G.M."/>
            <person name="Amores F."/>
            <person name="Phillips W."/>
            <person name="Marelli J.P."/>
            <person name="May G.D."/>
            <person name="Shapiro H."/>
            <person name="Ma J."/>
            <person name="Bustamante C.D."/>
            <person name="Schnell R.J."/>
            <person name="Main D."/>
            <person name="Gilbert D."/>
            <person name="Parida L."/>
            <person name="Kuhn D.N."/>
        </authorList>
    </citation>
    <scope>NUCLEOTIDE SEQUENCE [LARGE SCALE GENOMIC DNA]</scope>
    <source>
        <strain>cv. Matina 1-6</strain>
    </source>
</reference>
<reference key="2">
    <citation type="journal article" date="2008" name="Phytochemistry">
        <title>Caffeine and related purine alkaloids: biosynthesis, catabolism, function and genetic engineering.</title>
        <authorList>
            <person name="Ashihara H."/>
            <person name="Sano H."/>
            <person name="Crozier A."/>
        </authorList>
    </citation>
    <scope>REVIEW ON CAFFEINE BIOSYNTHESIS</scope>
</reference>
<comment type="function">
    <text evidence="1">Involved in the biosynthesis of theobromine.</text>
</comment>
<comment type="catalytic activity">
    <reaction evidence="1">
        <text>7-methylxanthine + S-adenosyl-L-methionine = theobromine + S-adenosyl-L-homocysteine + H(+)</text>
        <dbReference type="Rhea" id="RHEA:24604"/>
        <dbReference type="ChEBI" id="CHEBI:15378"/>
        <dbReference type="ChEBI" id="CHEBI:28946"/>
        <dbReference type="ChEBI" id="CHEBI:48991"/>
        <dbReference type="ChEBI" id="CHEBI:57856"/>
        <dbReference type="ChEBI" id="CHEBI:59789"/>
        <dbReference type="EC" id="2.1.1.159"/>
    </reaction>
    <physiologicalReaction direction="left-to-right" evidence="1">
        <dbReference type="Rhea" id="RHEA:24605"/>
    </physiologicalReaction>
</comment>
<comment type="cofactor">
    <cofactor evidence="4">
        <name>Mg(2+)</name>
        <dbReference type="ChEBI" id="CHEBI:18420"/>
    </cofactor>
    <text evidence="4">Binds 1 Mg(2+) ion per subunit.</text>
</comment>
<comment type="pathway">
    <text evidence="1">Alkaloid biosynthesis.</text>
</comment>
<comment type="similarity">
    <text evidence="6">Belongs to the methyltransferase superfamily. Type-7 methyltransferase family.</text>
</comment>
<dbReference type="EC" id="2.1.1.159" evidence="1"/>
<dbReference type="EMBL" id="CM001888">
    <property type="protein sequence ID" value="EOY17876.1"/>
    <property type="molecule type" value="Genomic_DNA"/>
</dbReference>
<dbReference type="eggNOG" id="ENOG502QQVK">
    <property type="taxonomic scope" value="Eukaryota"/>
</dbReference>
<dbReference type="HOGENOM" id="CLU_019628_2_0_1"/>
<dbReference type="InParanoid" id="A0A061FLA2"/>
<dbReference type="Proteomes" id="UP000026915">
    <property type="component" value="Chromosome 10"/>
</dbReference>
<dbReference type="Proteomes" id="UP000694886">
    <property type="component" value="Unplaced"/>
</dbReference>
<dbReference type="GO" id="GO:0046872">
    <property type="term" value="F:metal ion binding"/>
    <property type="evidence" value="ECO:0007669"/>
    <property type="project" value="UniProtKB-KW"/>
</dbReference>
<dbReference type="GO" id="GO:0008757">
    <property type="term" value="F:S-adenosylmethionine-dependent methyltransferase activity"/>
    <property type="evidence" value="ECO:0000318"/>
    <property type="project" value="GO_Central"/>
</dbReference>
<dbReference type="GO" id="GO:0032259">
    <property type="term" value="P:methylation"/>
    <property type="evidence" value="ECO:0000318"/>
    <property type="project" value="GO_Central"/>
</dbReference>
<dbReference type="Gene3D" id="1.10.1200.270">
    <property type="entry name" value="Methyltransferase, alpha-helical capping domain"/>
    <property type="match status" value="1"/>
</dbReference>
<dbReference type="Gene3D" id="3.40.50.150">
    <property type="entry name" value="Vaccinia Virus protein VP39"/>
    <property type="match status" value="1"/>
</dbReference>
<dbReference type="InterPro" id="IPR005299">
    <property type="entry name" value="MeTrfase_7"/>
</dbReference>
<dbReference type="InterPro" id="IPR042086">
    <property type="entry name" value="MeTrfase_capping"/>
</dbReference>
<dbReference type="InterPro" id="IPR029063">
    <property type="entry name" value="SAM-dependent_MTases_sf"/>
</dbReference>
<dbReference type="PANTHER" id="PTHR31009">
    <property type="entry name" value="S-ADENOSYL-L-METHIONINE:CARBOXYL METHYLTRANSFERASE FAMILY PROTEIN"/>
    <property type="match status" value="1"/>
</dbReference>
<dbReference type="Pfam" id="PF03492">
    <property type="entry name" value="Methyltransf_7"/>
    <property type="match status" value="1"/>
</dbReference>
<dbReference type="SUPFAM" id="SSF53335">
    <property type="entry name" value="S-adenosyl-L-methionine-dependent methyltransferases"/>
    <property type="match status" value="1"/>
</dbReference>
<proteinExistence type="inferred from homology"/>